<name>SSTT_STRPF</name>
<protein>
    <recommendedName>
        <fullName evidence="1">Serine/threonine transporter SstT</fullName>
    </recommendedName>
    <alternativeName>
        <fullName evidence="1">Na(+)/serine-threonine symporter</fullName>
    </alternativeName>
</protein>
<gene>
    <name evidence="1" type="primary">sstT</name>
    <name type="ordered locus">MGAS10750_Spy0270</name>
</gene>
<evidence type="ECO:0000255" key="1">
    <source>
        <dbReference type="HAMAP-Rule" id="MF_01582"/>
    </source>
</evidence>
<organism>
    <name type="scientific">Streptococcus pyogenes serotype M4 (strain MGAS10750)</name>
    <dbReference type="NCBI Taxonomy" id="370554"/>
    <lineage>
        <taxon>Bacteria</taxon>
        <taxon>Bacillati</taxon>
        <taxon>Bacillota</taxon>
        <taxon>Bacilli</taxon>
        <taxon>Lactobacillales</taxon>
        <taxon>Streptococcaceae</taxon>
        <taxon>Streptococcus</taxon>
    </lineage>
</organism>
<keyword id="KW-0029">Amino-acid transport</keyword>
<keyword id="KW-1003">Cell membrane</keyword>
<keyword id="KW-0472">Membrane</keyword>
<keyword id="KW-0769">Symport</keyword>
<keyword id="KW-0812">Transmembrane</keyword>
<keyword id="KW-1133">Transmembrane helix</keyword>
<keyword id="KW-0813">Transport</keyword>
<sequence>MKKIYDLWVRVSLIKKIGIGVVIGVMLGILAPDLTGFSILGKLFVGGLKAIAPLLVFALVSQAISHQKKGRQTNMTLIIFLYLFGTFASALVAVLTAYLFPLTLVLNTPVNTELSPPQGVAEVFQSLLLKLVDNPINALATANYIGVLSWAIIFGLALKAASQETKHLIKTAAEVTSQIVVWIINLAPIGIMSLVFTTISENGVGILSDYAFLILVLVGTMVFVALVVNPLIAVLITRQNPYPLVLRCLRESGLTAFFTRSSAANIPVNMQLCQKIGLSKDTYSVSIPLGATINMGGAAITINVLTLAAVHTFGIPIDFLTALLLSVVAAVSACGASGVAGGSLLLIPVACSLFGISNDLAMQVVGVGFIVGVIQDSCETALNSSTDVLFTAIAENAFWKRKKA</sequence>
<accession>Q1J8E1</accession>
<comment type="function">
    <text evidence="1">Involved in the import of serine and threonine into the cell, with the concomitant import of sodium (symport system).</text>
</comment>
<comment type="catalytic activity">
    <reaction evidence="1">
        <text>L-serine(in) + Na(+)(in) = L-serine(out) + Na(+)(out)</text>
        <dbReference type="Rhea" id="RHEA:29575"/>
        <dbReference type="ChEBI" id="CHEBI:29101"/>
        <dbReference type="ChEBI" id="CHEBI:33384"/>
    </reaction>
    <physiologicalReaction direction="right-to-left" evidence="1">
        <dbReference type="Rhea" id="RHEA:29577"/>
    </physiologicalReaction>
</comment>
<comment type="catalytic activity">
    <reaction evidence="1">
        <text>L-threonine(in) + Na(+)(in) = L-threonine(out) + Na(+)(out)</text>
        <dbReference type="Rhea" id="RHEA:69999"/>
        <dbReference type="ChEBI" id="CHEBI:29101"/>
        <dbReference type="ChEBI" id="CHEBI:57926"/>
    </reaction>
    <physiologicalReaction direction="right-to-left" evidence="1">
        <dbReference type="Rhea" id="RHEA:70001"/>
    </physiologicalReaction>
</comment>
<comment type="subcellular location">
    <subcellularLocation>
        <location evidence="1">Cell membrane</location>
        <topology evidence="1">Multi-pass membrane protein</topology>
    </subcellularLocation>
</comment>
<comment type="similarity">
    <text evidence="1">Belongs to the dicarboxylate/amino acid:cation symporter (DAACS) (TC 2.A.23) family.</text>
</comment>
<feature type="chain" id="PRO_0000309144" description="Serine/threonine transporter SstT">
    <location>
        <begin position="1"/>
        <end position="404"/>
    </location>
</feature>
<feature type="transmembrane region" description="Helical" evidence="1">
    <location>
        <begin position="17"/>
        <end position="37"/>
    </location>
</feature>
<feature type="transmembrane region" description="Helical" evidence="1">
    <location>
        <begin position="39"/>
        <end position="59"/>
    </location>
</feature>
<feature type="transmembrane region" description="Helical" evidence="1">
    <location>
        <begin position="75"/>
        <end position="95"/>
    </location>
</feature>
<feature type="transmembrane region" description="Helical" evidence="1">
    <location>
        <begin position="138"/>
        <end position="158"/>
    </location>
</feature>
<feature type="transmembrane region" description="Helical" evidence="1">
    <location>
        <begin position="179"/>
        <end position="199"/>
    </location>
</feature>
<feature type="transmembrane region" description="Helical" evidence="1">
    <location>
        <begin position="212"/>
        <end position="232"/>
    </location>
</feature>
<feature type="transmembrane region" description="Helical" evidence="1">
    <location>
        <begin position="287"/>
        <end position="307"/>
    </location>
</feature>
<feature type="transmembrane region" description="Helical" evidence="1">
    <location>
        <begin position="313"/>
        <end position="333"/>
    </location>
</feature>
<proteinExistence type="inferred from homology"/>
<reference key="1">
    <citation type="journal article" date="2006" name="Proc. Natl. Acad. Sci. U.S.A.">
        <title>Molecular genetic anatomy of inter- and intraserotype variation in the human bacterial pathogen group A Streptococcus.</title>
        <authorList>
            <person name="Beres S.B."/>
            <person name="Richter E.W."/>
            <person name="Nagiec M.J."/>
            <person name="Sumby P."/>
            <person name="Porcella S.F."/>
            <person name="DeLeo F.R."/>
            <person name="Musser J.M."/>
        </authorList>
    </citation>
    <scope>NUCLEOTIDE SEQUENCE [LARGE SCALE GENOMIC DNA]</scope>
    <source>
        <strain>MGAS10750</strain>
    </source>
</reference>
<dbReference type="EMBL" id="CP000262">
    <property type="protein sequence ID" value="ABF37220.1"/>
    <property type="molecule type" value="Genomic_DNA"/>
</dbReference>
<dbReference type="SMR" id="Q1J8E1"/>
<dbReference type="KEGG" id="spi:MGAS10750_Spy0270"/>
<dbReference type="HOGENOM" id="CLU_044581_0_0_9"/>
<dbReference type="Proteomes" id="UP000002434">
    <property type="component" value="Chromosome"/>
</dbReference>
<dbReference type="GO" id="GO:0005886">
    <property type="term" value="C:plasma membrane"/>
    <property type="evidence" value="ECO:0007669"/>
    <property type="project" value="UniProtKB-SubCell"/>
</dbReference>
<dbReference type="GO" id="GO:0005295">
    <property type="term" value="F:neutral L-amino acid:sodium symporter activity"/>
    <property type="evidence" value="ECO:0007669"/>
    <property type="project" value="TreeGrafter"/>
</dbReference>
<dbReference type="GO" id="GO:0032329">
    <property type="term" value="P:serine transport"/>
    <property type="evidence" value="ECO:0007669"/>
    <property type="project" value="InterPro"/>
</dbReference>
<dbReference type="GO" id="GO:0015826">
    <property type="term" value="P:threonine transport"/>
    <property type="evidence" value="ECO:0007669"/>
    <property type="project" value="InterPro"/>
</dbReference>
<dbReference type="FunFam" id="1.10.3860.10:FF:000003">
    <property type="entry name" value="Serine/threonine transporter sstT"/>
    <property type="match status" value="1"/>
</dbReference>
<dbReference type="Gene3D" id="1.10.3860.10">
    <property type="entry name" value="Sodium:dicarboxylate symporter"/>
    <property type="match status" value="1"/>
</dbReference>
<dbReference type="HAMAP" id="MF_01582">
    <property type="entry name" value="Ser_Thr_transp_SstT"/>
    <property type="match status" value="1"/>
</dbReference>
<dbReference type="InterPro" id="IPR001991">
    <property type="entry name" value="Na-dicarboxylate_symporter"/>
</dbReference>
<dbReference type="InterPro" id="IPR036458">
    <property type="entry name" value="Na:dicarbo_symporter_sf"/>
</dbReference>
<dbReference type="InterPro" id="IPR023025">
    <property type="entry name" value="Ser_Thr_transp_SstT"/>
</dbReference>
<dbReference type="NCBIfam" id="NF010151">
    <property type="entry name" value="PRK13628.1"/>
    <property type="match status" value="1"/>
</dbReference>
<dbReference type="PANTHER" id="PTHR42865">
    <property type="entry name" value="PROTON/GLUTAMATE-ASPARTATE SYMPORTER"/>
    <property type="match status" value="1"/>
</dbReference>
<dbReference type="PANTHER" id="PTHR42865:SF8">
    <property type="entry name" value="SERINE_THREONINE TRANSPORTER SSTT"/>
    <property type="match status" value="1"/>
</dbReference>
<dbReference type="Pfam" id="PF00375">
    <property type="entry name" value="SDF"/>
    <property type="match status" value="1"/>
</dbReference>
<dbReference type="PRINTS" id="PR00173">
    <property type="entry name" value="EDTRNSPORT"/>
</dbReference>
<dbReference type="SUPFAM" id="SSF118215">
    <property type="entry name" value="Proton glutamate symport protein"/>
    <property type="match status" value="1"/>
</dbReference>